<dbReference type="EC" id="2.8.1.13" evidence="1"/>
<dbReference type="EMBL" id="BA000040">
    <property type="protein sequence ID" value="BAC52260.1"/>
    <property type="molecule type" value="Genomic_DNA"/>
</dbReference>
<dbReference type="RefSeq" id="NP_773635.1">
    <property type="nucleotide sequence ID" value="NC_004463.1"/>
</dbReference>
<dbReference type="RefSeq" id="WP_011089733.1">
    <property type="nucleotide sequence ID" value="NC_004463.1"/>
</dbReference>
<dbReference type="SMR" id="Q89ES7"/>
<dbReference type="FunCoup" id="Q89ES7">
    <property type="interactions" value="708"/>
</dbReference>
<dbReference type="STRING" id="224911.AAV28_32580"/>
<dbReference type="EnsemblBacteria" id="BAC52260">
    <property type="protein sequence ID" value="BAC52260"/>
    <property type="gene ID" value="BAC52260"/>
</dbReference>
<dbReference type="GeneID" id="46493959"/>
<dbReference type="KEGG" id="bja:bll6995"/>
<dbReference type="PATRIC" id="fig|224911.44.peg.7035"/>
<dbReference type="eggNOG" id="COG0482">
    <property type="taxonomic scope" value="Bacteria"/>
</dbReference>
<dbReference type="HOGENOM" id="CLU_035188_0_1_5"/>
<dbReference type="InParanoid" id="Q89ES7"/>
<dbReference type="OrthoDB" id="9800696at2"/>
<dbReference type="PhylomeDB" id="Q89ES7"/>
<dbReference type="Proteomes" id="UP000002526">
    <property type="component" value="Chromosome"/>
</dbReference>
<dbReference type="GO" id="GO:0005737">
    <property type="term" value="C:cytoplasm"/>
    <property type="evidence" value="ECO:0007669"/>
    <property type="project" value="UniProtKB-SubCell"/>
</dbReference>
<dbReference type="GO" id="GO:0005524">
    <property type="term" value="F:ATP binding"/>
    <property type="evidence" value="ECO:0007669"/>
    <property type="project" value="UniProtKB-KW"/>
</dbReference>
<dbReference type="GO" id="GO:0000049">
    <property type="term" value="F:tRNA binding"/>
    <property type="evidence" value="ECO:0007669"/>
    <property type="project" value="UniProtKB-KW"/>
</dbReference>
<dbReference type="GO" id="GO:0103016">
    <property type="term" value="F:tRNA-uridine 2-sulfurtransferase activity"/>
    <property type="evidence" value="ECO:0007669"/>
    <property type="project" value="UniProtKB-EC"/>
</dbReference>
<dbReference type="GO" id="GO:0002143">
    <property type="term" value="P:tRNA wobble position uridine thiolation"/>
    <property type="evidence" value="ECO:0000318"/>
    <property type="project" value="GO_Central"/>
</dbReference>
<dbReference type="CDD" id="cd01998">
    <property type="entry name" value="MnmA_TRMU-like"/>
    <property type="match status" value="1"/>
</dbReference>
<dbReference type="FunFam" id="2.30.30.280:FF:000001">
    <property type="entry name" value="tRNA-specific 2-thiouridylase MnmA"/>
    <property type="match status" value="1"/>
</dbReference>
<dbReference type="FunFam" id="3.40.50.620:FF:000115">
    <property type="entry name" value="tRNA-specific 2-thiouridylase MnmA"/>
    <property type="match status" value="1"/>
</dbReference>
<dbReference type="Gene3D" id="2.30.30.280">
    <property type="entry name" value="Adenine nucleotide alpha hydrolases-like domains"/>
    <property type="match status" value="1"/>
</dbReference>
<dbReference type="Gene3D" id="3.40.50.620">
    <property type="entry name" value="HUPs"/>
    <property type="match status" value="1"/>
</dbReference>
<dbReference type="Gene3D" id="2.40.30.10">
    <property type="entry name" value="Translation factors"/>
    <property type="match status" value="1"/>
</dbReference>
<dbReference type="HAMAP" id="MF_00144">
    <property type="entry name" value="tRNA_thiouridyl_MnmA"/>
    <property type="match status" value="1"/>
</dbReference>
<dbReference type="InterPro" id="IPR004506">
    <property type="entry name" value="MnmA-like"/>
</dbReference>
<dbReference type="InterPro" id="IPR046885">
    <property type="entry name" value="MnmA-like_C"/>
</dbReference>
<dbReference type="InterPro" id="IPR046884">
    <property type="entry name" value="MnmA-like_central"/>
</dbReference>
<dbReference type="InterPro" id="IPR023382">
    <property type="entry name" value="MnmA-like_central_sf"/>
</dbReference>
<dbReference type="InterPro" id="IPR014729">
    <property type="entry name" value="Rossmann-like_a/b/a_fold"/>
</dbReference>
<dbReference type="NCBIfam" id="NF001138">
    <property type="entry name" value="PRK00143.1"/>
    <property type="match status" value="1"/>
</dbReference>
<dbReference type="NCBIfam" id="TIGR00420">
    <property type="entry name" value="trmU"/>
    <property type="match status" value="1"/>
</dbReference>
<dbReference type="PANTHER" id="PTHR11933:SF5">
    <property type="entry name" value="MITOCHONDRIAL TRNA-SPECIFIC 2-THIOURIDYLASE 1"/>
    <property type="match status" value="1"/>
</dbReference>
<dbReference type="PANTHER" id="PTHR11933">
    <property type="entry name" value="TRNA 5-METHYLAMINOMETHYL-2-THIOURIDYLATE -METHYLTRANSFERASE"/>
    <property type="match status" value="1"/>
</dbReference>
<dbReference type="Pfam" id="PF03054">
    <property type="entry name" value="tRNA_Me_trans"/>
    <property type="match status" value="1"/>
</dbReference>
<dbReference type="Pfam" id="PF20258">
    <property type="entry name" value="tRNA_Me_trans_C"/>
    <property type="match status" value="1"/>
</dbReference>
<dbReference type="Pfam" id="PF20259">
    <property type="entry name" value="tRNA_Me_trans_M"/>
    <property type="match status" value="1"/>
</dbReference>
<dbReference type="SUPFAM" id="SSF52402">
    <property type="entry name" value="Adenine nucleotide alpha hydrolases-like"/>
    <property type="match status" value="1"/>
</dbReference>
<sequence length="393" mass="42570">MLNSLDLEGRPQDTRVVVAMSGGVDSSTTAALLKAEGYDVVGITLQLYDHGAATHRKGACCAGQDIHDARDVAAKLGIPHYVLDYEDRFRESVIDNFADSYALGETPVPCIECNRSIKFRDLLKTARELGAQALATGHYVASRRLDDGSRVLVCAADADRDQSYFLFATTQEQLDYLRFPLGDMTKPETRELARRFGLAVADKHDSQDICFVPTGRYTDIITRLRPNAMDPGDIVDLDGRVLGRHNGIANFTVGQRRGLGIAAHAPLFVVRLEAANRRVVVGPREALKMHRISLRDVNWLGGGDIDSAIGNGLEMFVRVRSTRSPQPAWLRGAGGHYEIELVAGEEGVSPGQACVFYDAPSGQARVLGGGFIQSAAAKVASNPARPLVEAVRG</sequence>
<keyword id="KW-0067">ATP-binding</keyword>
<keyword id="KW-0963">Cytoplasm</keyword>
<keyword id="KW-1015">Disulfide bond</keyword>
<keyword id="KW-0547">Nucleotide-binding</keyword>
<keyword id="KW-1185">Reference proteome</keyword>
<keyword id="KW-0694">RNA-binding</keyword>
<keyword id="KW-0808">Transferase</keyword>
<keyword id="KW-0819">tRNA processing</keyword>
<keyword id="KW-0820">tRNA-binding</keyword>
<proteinExistence type="inferred from homology"/>
<organism>
    <name type="scientific">Bradyrhizobium diazoefficiens (strain JCM 10833 / BCRC 13528 / IAM 13628 / NBRC 14792 / USDA 110)</name>
    <dbReference type="NCBI Taxonomy" id="224911"/>
    <lineage>
        <taxon>Bacteria</taxon>
        <taxon>Pseudomonadati</taxon>
        <taxon>Pseudomonadota</taxon>
        <taxon>Alphaproteobacteria</taxon>
        <taxon>Hyphomicrobiales</taxon>
        <taxon>Nitrobacteraceae</taxon>
        <taxon>Bradyrhizobium</taxon>
    </lineage>
</organism>
<feature type="chain" id="PRO_0000349545" description="tRNA-specific 2-thiouridylase MnmA">
    <location>
        <begin position="1"/>
        <end position="393"/>
    </location>
</feature>
<feature type="region of interest" description="Interaction with tRNA" evidence="1">
    <location>
        <begin position="160"/>
        <end position="162"/>
    </location>
</feature>
<feature type="active site" description="Nucleophile" evidence="1">
    <location>
        <position position="113"/>
    </location>
</feature>
<feature type="active site" description="Cysteine persulfide intermediate" evidence="1">
    <location>
        <position position="210"/>
    </location>
</feature>
<feature type="binding site" evidence="1">
    <location>
        <begin position="19"/>
        <end position="26"/>
    </location>
    <ligand>
        <name>ATP</name>
        <dbReference type="ChEBI" id="CHEBI:30616"/>
    </ligand>
</feature>
<feature type="binding site" evidence="1">
    <location>
        <position position="45"/>
    </location>
    <ligand>
        <name>ATP</name>
        <dbReference type="ChEBI" id="CHEBI:30616"/>
    </ligand>
</feature>
<feature type="binding site" evidence="1">
    <location>
        <position position="137"/>
    </location>
    <ligand>
        <name>ATP</name>
        <dbReference type="ChEBI" id="CHEBI:30616"/>
    </ligand>
</feature>
<feature type="site" description="Interaction with tRNA" evidence="1">
    <location>
        <position position="138"/>
    </location>
</feature>
<feature type="site" description="Interaction with tRNA" evidence="1">
    <location>
        <position position="352"/>
    </location>
</feature>
<feature type="disulfide bond" description="Alternate" evidence="1">
    <location>
        <begin position="113"/>
        <end position="210"/>
    </location>
</feature>
<protein>
    <recommendedName>
        <fullName evidence="1">tRNA-specific 2-thiouridylase MnmA</fullName>
        <ecNumber evidence="1">2.8.1.13</ecNumber>
    </recommendedName>
</protein>
<accession>Q89ES7</accession>
<comment type="function">
    <text evidence="1">Catalyzes the 2-thiolation of uridine at the wobble position (U34) of tRNA, leading to the formation of s(2)U34.</text>
</comment>
<comment type="catalytic activity">
    <reaction evidence="1">
        <text>S-sulfanyl-L-cysteinyl-[protein] + uridine(34) in tRNA + AH2 + ATP = 2-thiouridine(34) in tRNA + L-cysteinyl-[protein] + A + AMP + diphosphate + H(+)</text>
        <dbReference type="Rhea" id="RHEA:47032"/>
        <dbReference type="Rhea" id="RHEA-COMP:10131"/>
        <dbReference type="Rhea" id="RHEA-COMP:11726"/>
        <dbReference type="Rhea" id="RHEA-COMP:11727"/>
        <dbReference type="Rhea" id="RHEA-COMP:11728"/>
        <dbReference type="ChEBI" id="CHEBI:13193"/>
        <dbReference type="ChEBI" id="CHEBI:15378"/>
        <dbReference type="ChEBI" id="CHEBI:17499"/>
        <dbReference type="ChEBI" id="CHEBI:29950"/>
        <dbReference type="ChEBI" id="CHEBI:30616"/>
        <dbReference type="ChEBI" id="CHEBI:33019"/>
        <dbReference type="ChEBI" id="CHEBI:61963"/>
        <dbReference type="ChEBI" id="CHEBI:65315"/>
        <dbReference type="ChEBI" id="CHEBI:87170"/>
        <dbReference type="ChEBI" id="CHEBI:456215"/>
        <dbReference type="EC" id="2.8.1.13"/>
    </reaction>
</comment>
<comment type="subcellular location">
    <subcellularLocation>
        <location evidence="1">Cytoplasm</location>
    </subcellularLocation>
</comment>
<comment type="similarity">
    <text evidence="1">Belongs to the MnmA/TRMU family.</text>
</comment>
<name>MNMA_BRADU</name>
<reference key="1">
    <citation type="journal article" date="2002" name="DNA Res.">
        <title>Complete genomic sequence of nitrogen-fixing symbiotic bacterium Bradyrhizobium japonicum USDA110.</title>
        <authorList>
            <person name="Kaneko T."/>
            <person name="Nakamura Y."/>
            <person name="Sato S."/>
            <person name="Minamisawa K."/>
            <person name="Uchiumi T."/>
            <person name="Sasamoto S."/>
            <person name="Watanabe A."/>
            <person name="Idesawa K."/>
            <person name="Iriguchi M."/>
            <person name="Kawashima K."/>
            <person name="Kohara M."/>
            <person name="Matsumoto M."/>
            <person name="Shimpo S."/>
            <person name="Tsuruoka H."/>
            <person name="Wada T."/>
            <person name="Yamada M."/>
            <person name="Tabata S."/>
        </authorList>
    </citation>
    <scope>NUCLEOTIDE SEQUENCE [LARGE SCALE GENOMIC DNA]</scope>
    <source>
        <strain>JCM 10833 / BCRC 13528 / IAM 13628 / NBRC 14792 / USDA 110</strain>
    </source>
</reference>
<gene>
    <name evidence="1" type="primary">mnmA</name>
    <name type="ordered locus">bll6995</name>
</gene>
<evidence type="ECO:0000255" key="1">
    <source>
        <dbReference type="HAMAP-Rule" id="MF_00144"/>
    </source>
</evidence>